<comment type="function">
    <text evidence="2">Repetitive secreted protein essential for pathogenic development (PubMed:17917743). Hum3 and rsp1 together are pathogenicity proteins that share an essential function in early stages of the infection (PubMed:17917743).</text>
</comment>
<comment type="subcellular location">
    <subcellularLocation>
        <location evidence="2">Secreted</location>
    </subcellularLocation>
</comment>
<comment type="PTM">
    <text evidence="4">Rsp1 is processed by the subtilisin-like endoprotease kex2. Cleavage by kex2 generates 11 peptides.</text>
</comment>
<comment type="disruption phenotype">
    <text evidence="2">Leads to complete loss of pathogenicity when hum3 is also deleted.</text>
</comment>
<evidence type="ECO:0000255" key="1"/>
<evidence type="ECO:0000269" key="2">
    <source>
    </source>
</evidence>
<evidence type="ECO:0000303" key="3">
    <source>
    </source>
</evidence>
<evidence type="ECO:0000305" key="4">
    <source>
    </source>
</evidence>
<organism>
    <name type="scientific">Mycosarcoma maydis</name>
    <name type="common">Corn smut fungus</name>
    <name type="synonym">Ustilago maydis</name>
    <dbReference type="NCBI Taxonomy" id="5270"/>
    <lineage>
        <taxon>Eukaryota</taxon>
        <taxon>Fungi</taxon>
        <taxon>Dikarya</taxon>
        <taxon>Basidiomycota</taxon>
        <taxon>Ustilaginomycotina</taxon>
        <taxon>Ustilaginomycetes</taxon>
        <taxon>Ustilaginales</taxon>
        <taxon>Ustilaginaceae</taxon>
        <taxon>Mycosarcoma</taxon>
    </lineage>
</organism>
<dbReference type="EMBL" id="CM003160">
    <property type="protein sequence ID" value="KIS66021.1"/>
    <property type="molecule type" value="Genomic_DNA"/>
</dbReference>
<dbReference type="RefSeq" id="XP_011392460.1">
    <property type="nucleotide sequence ID" value="XM_011394158.1"/>
</dbReference>
<dbReference type="EnsemblFungi" id="KIS66021">
    <property type="protein sequence ID" value="KIS66021"/>
    <property type="gene ID" value="UMAG_06112"/>
</dbReference>
<dbReference type="GeneID" id="23565810"/>
<dbReference type="KEGG" id="uma:UMAG_06112"/>
<dbReference type="VEuPathDB" id="FungiDB:UMAG_06112"/>
<dbReference type="eggNOG" id="ENOG502QPMX">
    <property type="taxonomic scope" value="Eukaryota"/>
</dbReference>
<dbReference type="InParanoid" id="A0A0D1DPX0"/>
<dbReference type="OMA" id="CIKGTER"/>
<dbReference type="OrthoDB" id="2555297at2759"/>
<dbReference type="Proteomes" id="UP000000561">
    <property type="component" value="Chromosome 21"/>
</dbReference>
<dbReference type="PANTHER" id="PTHR35838">
    <property type="entry name" value="CHROMOSOME 21, WHOLE GENOME SHOTGUN SEQUENCE"/>
    <property type="match status" value="1"/>
</dbReference>
<dbReference type="PANTHER" id="PTHR35838:SF1">
    <property type="entry name" value="TRICHOHYALIN-LIKE"/>
    <property type="match status" value="1"/>
</dbReference>
<dbReference type="PROSITE" id="PS51257">
    <property type="entry name" value="PROKAR_LIPOPROTEIN"/>
    <property type="match status" value="1"/>
</dbReference>
<keyword id="KW-1185">Reference proteome</keyword>
<keyword id="KW-0964">Secreted</keyword>
<keyword id="KW-0732">Signal</keyword>
<keyword id="KW-0843">Virulence</keyword>
<sequence>MKLSFTIVATAALVASCTFAAPTPASSKLATRYDGDIIDETNAALKDLGLKKRYDGDIIDETNAALKDLGLKKRYDGDIIDETNAALKDLGLKKRYDGDIIDKTNAALKDLGLKKRYDGDIIDETNAALKDLGLKKRYDGDIIDETNAALKDLGLKKRYDGDIIDETNAALKDLGLKKRYDGDIIDETNAALKDLGLKKRYEGDVLDEINGCLTSLGFRKRYEGDVLDELAAAEKEFGVRKRYEGDVLDAVNGCLKSLGL</sequence>
<proteinExistence type="evidence at protein level"/>
<accession>A0A0D1DPX0</accession>
<gene>
    <name evidence="3" type="primary">rsp1</name>
    <name type="ORF">UMAG_06112</name>
</gene>
<reference key="1">
    <citation type="journal article" date="2006" name="Nature">
        <title>Insights from the genome of the biotrophic fungal plant pathogen Ustilago maydis.</title>
        <authorList>
            <person name="Kaemper J."/>
            <person name="Kahmann R."/>
            <person name="Boelker M."/>
            <person name="Ma L.-J."/>
            <person name="Brefort T."/>
            <person name="Saville B.J."/>
            <person name="Banuett F."/>
            <person name="Kronstad J.W."/>
            <person name="Gold S.E."/>
            <person name="Mueller O."/>
            <person name="Perlin M.H."/>
            <person name="Woesten H.A.B."/>
            <person name="de Vries R."/>
            <person name="Ruiz-Herrera J."/>
            <person name="Reynaga-Pena C.G."/>
            <person name="Snetselaar K."/>
            <person name="McCann M."/>
            <person name="Perez-Martin J."/>
            <person name="Feldbruegge M."/>
            <person name="Basse C.W."/>
            <person name="Steinberg G."/>
            <person name="Ibeas J.I."/>
            <person name="Holloman W."/>
            <person name="Guzman P."/>
            <person name="Farman M.L."/>
            <person name="Stajich J.E."/>
            <person name="Sentandreu R."/>
            <person name="Gonzalez-Prieto J.M."/>
            <person name="Kennell J.C."/>
            <person name="Molina L."/>
            <person name="Schirawski J."/>
            <person name="Mendoza-Mendoza A."/>
            <person name="Greilinger D."/>
            <person name="Muench K."/>
            <person name="Roessel N."/>
            <person name="Scherer M."/>
            <person name="Vranes M."/>
            <person name="Ladendorf O."/>
            <person name="Vincon V."/>
            <person name="Fuchs U."/>
            <person name="Sandrock B."/>
            <person name="Meng S."/>
            <person name="Ho E.C.H."/>
            <person name="Cahill M.J."/>
            <person name="Boyce K.J."/>
            <person name="Klose J."/>
            <person name="Klosterman S.J."/>
            <person name="Deelstra H.J."/>
            <person name="Ortiz-Castellanos L."/>
            <person name="Li W."/>
            <person name="Sanchez-Alonso P."/>
            <person name="Schreier P.H."/>
            <person name="Haeuser-Hahn I."/>
            <person name="Vaupel M."/>
            <person name="Koopmann E."/>
            <person name="Friedrich G."/>
            <person name="Voss H."/>
            <person name="Schlueter T."/>
            <person name="Margolis J."/>
            <person name="Platt D."/>
            <person name="Swimmer C."/>
            <person name="Gnirke A."/>
            <person name="Chen F."/>
            <person name="Vysotskaia V."/>
            <person name="Mannhaupt G."/>
            <person name="Gueldener U."/>
            <person name="Muensterkoetter M."/>
            <person name="Haase D."/>
            <person name="Oesterheld M."/>
            <person name="Mewes H.-W."/>
            <person name="Mauceli E.W."/>
            <person name="DeCaprio D."/>
            <person name="Wade C.M."/>
            <person name="Butler J."/>
            <person name="Young S.K."/>
            <person name="Jaffe D.B."/>
            <person name="Calvo S.E."/>
            <person name="Nusbaum C."/>
            <person name="Galagan J.E."/>
            <person name="Birren B.W."/>
        </authorList>
    </citation>
    <scope>NUCLEOTIDE SEQUENCE [LARGE SCALE GENOMIC DNA]</scope>
    <source>
        <strain>DSM 14603 / FGSC 9021 / UM521</strain>
    </source>
</reference>
<reference key="2">
    <citation type="submission" date="2014-09" db="EMBL/GenBank/DDBJ databases">
        <authorList>
            <person name="Gueldener U."/>
            <person name="Muensterkoetter M."/>
            <person name="Walter M.C."/>
            <person name="Mannhaupt G."/>
            <person name="Kahmann R."/>
        </authorList>
    </citation>
    <scope>GENOME REANNOTATION</scope>
    <source>
        <strain>DSM 14603 / FGSC 9021 / UM521</strain>
    </source>
</reference>
<reference key="3">
    <citation type="journal article" date="2008" name="Mol. Genet. Genomics">
        <title>Identification and characterization of secreted and pathogenesis-related proteins in Ustilago maydis.</title>
        <authorList>
            <person name="Mueller O."/>
            <person name="Schreier P.H."/>
            <person name="Uhrig J.F."/>
        </authorList>
    </citation>
    <scope>FUNCTION</scope>
    <scope>DISRUPTION PHENOTYPE</scope>
    <scope>SUBCELLULAR LOCATION</scope>
    <scope>CLEAVAGE BY KEX2</scope>
</reference>
<feature type="signal peptide" evidence="1">
    <location>
        <begin position="1"/>
        <end position="20"/>
    </location>
</feature>
<feature type="chain" id="PRO_5002244890" description="Repetitive secreted protein 1">
    <location>
        <begin position="21"/>
        <end position="260"/>
    </location>
</feature>
<feature type="peptide" id="PRO_0000462433" description="Rsp1-1" evidence="2">
    <location>
        <begin position="21"/>
        <end position="53"/>
    </location>
</feature>
<feature type="peptide" id="PRO_0000462434" description="Rsp1-2" evidence="2">
    <location>
        <begin position="54"/>
        <end position="74"/>
    </location>
</feature>
<feature type="peptide" id="PRO_0000462435" description="Rsp1-3" evidence="2">
    <location>
        <begin position="75"/>
        <end position="95"/>
    </location>
</feature>
<feature type="peptide" id="PRO_0000462436" description="Rsp1-4" evidence="2">
    <location>
        <begin position="96"/>
        <end position="116"/>
    </location>
</feature>
<feature type="peptide" id="PRO_0000462437" description="Rsp1-5" evidence="2">
    <location>
        <begin position="117"/>
        <end position="137"/>
    </location>
</feature>
<feature type="peptide" id="PRO_0000462438" description="Rsp1-6" evidence="2">
    <location>
        <begin position="138"/>
        <end position="158"/>
    </location>
</feature>
<feature type="peptide" id="PRO_0000462439" description="Rsp1-7" evidence="2">
    <location>
        <begin position="159"/>
        <end position="179"/>
    </location>
</feature>
<feature type="peptide" id="PRO_0000462440" description="Rsp1-8" evidence="2">
    <location>
        <begin position="180"/>
        <end position="200"/>
    </location>
</feature>
<feature type="peptide" id="PRO_0000462441" description="Rsp1-9" evidence="2">
    <location>
        <begin position="201"/>
        <end position="221"/>
    </location>
</feature>
<feature type="peptide" id="PRO_0000462442" description="Rsp1-10" evidence="2">
    <location>
        <begin position="222"/>
        <end position="242"/>
    </location>
</feature>
<feature type="peptide" id="PRO_0000462443" description="Rsp1-11" evidence="2">
    <location>
        <begin position="243"/>
        <end position="260"/>
    </location>
</feature>
<name>RSP1_MYCMD</name>
<protein>
    <recommendedName>
        <fullName evidence="3">Repetitive secreted protein 1</fullName>
    </recommendedName>
    <component>
        <recommendedName>
            <fullName>Rsp1-1</fullName>
        </recommendedName>
    </component>
    <component>
        <recommendedName>
            <fullName>Rsp1-2</fullName>
        </recommendedName>
    </component>
    <component>
        <recommendedName>
            <fullName>Rsp1-3</fullName>
        </recommendedName>
    </component>
    <component>
        <recommendedName>
            <fullName>Rsp1-4</fullName>
        </recommendedName>
    </component>
    <component>
        <recommendedName>
            <fullName>Rsp1-5</fullName>
        </recommendedName>
    </component>
    <component>
        <recommendedName>
            <fullName>Rsp1-6</fullName>
        </recommendedName>
    </component>
    <component>
        <recommendedName>
            <fullName>Rsp1-7</fullName>
        </recommendedName>
    </component>
    <component>
        <recommendedName>
            <fullName>Rsp1-8</fullName>
        </recommendedName>
    </component>
    <component>
        <recommendedName>
            <fullName>Rsp1-9</fullName>
        </recommendedName>
    </component>
    <component>
        <recommendedName>
            <fullName>Rsp1-10</fullName>
        </recommendedName>
    </component>
    <component>
        <recommendedName>
            <fullName>Rsp1-11</fullName>
        </recommendedName>
    </component>
</protein>